<comment type="function">
    <text evidence="1">Component of the NOP7 complex, which is required for maturation of the 25S and 5.8S ribosomal RNAs and formation of the 60S ribosome.</text>
</comment>
<comment type="subunit">
    <text evidence="1">Component of the NOP7 complex, composed of ERB1, NOP7 and YTM1. The complex is held together by ERB1, which interacts with NOP7 via its N-terminal domain and with YTM1 via a high-affinity interaction between the seven-bladed beta-propeller domains of the 2 proteins. The NOP7 complex associates with the 66S pre-ribosome.</text>
</comment>
<comment type="subcellular location">
    <subcellularLocation>
        <location evidence="1">Nucleus</location>
        <location evidence="1">Nucleolus</location>
    </subcellularLocation>
    <subcellularLocation>
        <location evidence="1">Nucleus</location>
        <location evidence="1">Nucleoplasm</location>
    </subcellularLocation>
</comment>
<comment type="similarity">
    <text evidence="1">Belongs to the pescadillo family.</text>
</comment>
<feature type="chain" id="PRO_0000410187" description="Pescadillo homolog">
    <location>
        <begin position="1"/>
        <end position="632"/>
    </location>
</feature>
<feature type="domain" description="BRCT" evidence="1">
    <location>
        <begin position="361"/>
        <end position="459"/>
    </location>
</feature>
<feature type="region of interest" description="Disordered" evidence="2">
    <location>
        <begin position="306"/>
        <end position="341"/>
    </location>
</feature>
<feature type="region of interest" description="Disordered" evidence="2">
    <location>
        <begin position="485"/>
        <end position="535"/>
    </location>
</feature>
<feature type="region of interest" description="Disordered" evidence="2">
    <location>
        <begin position="565"/>
        <end position="585"/>
    </location>
</feature>
<feature type="region of interest" description="Disordered" evidence="2">
    <location>
        <begin position="601"/>
        <end position="632"/>
    </location>
</feature>
<feature type="coiled-coil region" evidence="1">
    <location>
        <begin position="595"/>
        <end position="632"/>
    </location>
</feature>
<feature type="compositionally biased region" description="Acidic residues" evidence="2">
    <location>
        <begin position="307"/>
        <end position="328"/>
    </location>
</feature>
<feature type="compositionally biased region" description="Acidic residues" evidence="2">
    <location>
        <begin position="492"/>
        <end position="516"/>
    </location>
</feature>
<feature type="compositionally biased region" description="Low complexity" evidence="2">
    <location>
        <begin position="521"/>
        <end position="531"/>
    </location>
</feature>
<feature type="compositionally biased region" description="Basic and acidic residues" evidence="2">
    <location>
        <begin position="576"/>
        <end position="585"/>
    </location>
</feature>
<feature type="compositionally biased region" description="Basic and acidic residues" evidence="2">
    <location>
        <begin position="605"/>
        <end position="616"/>
    </location>
</feature>
<proteinExistence type="inferred from homology"/>
<evidence type="ECO:0000255" key="1">
    <source>
        <dbReference type="HAMAP-Rule" id="MF_03028"/>
    </source>
</evidence>
<evidence type="ECO:0000256" key="2">
    <source>
        <dbReference type="SAM" id="MobiDB-lite"/>
    </source>
</evidence>
<name>PESC_CRYNB</name>
<protein>
    <recommendedName>
        <fullName evidence="1">Pescadillo homolog</fullName>
    </recommendedName>
    <alternativeName>
        <fullName evidence="1">Nucleolar protein 7 homolog</fullName>
    </alternativeName>
</protein>
<accession>P0CP59</accession>
<accession>Q55XB6</accession>
<accession>Q5KML7</accession>
<dbReference type="EMBL" id="AAEY01000010">
    <property type="protein sequence ID" value="EAL22569.1"/>
    <property type="molecule type" value="Genomic_DNA"/>
</dbReference>
<dbReference type="RefSeq" id="XP_777216.1">
    <property type="nucleotide sequence ID" value="XM_772123.1"/>
</dbReference>
<dbReference type="SMR" id="P0CP59"/>
<dbReference type="EnsemblFungi" id="AAW41492">
    <property type="protein sequence ID" value="AAW41492"/>
    <property type="gene ID" value="CNB01260"/>
</dbReference>
<dbReference type="GeneID" id="4934540"/>
<dbReference type="KEGG" id="cnb:CNBB4460"/>
<dbReference type="VEuPathDB" id="FungiDB:CNBB4460"/>
<dbReference type="HOGENOM" id="CLU_019619_1_1_1"/>
<dbReference type="OrthoDB" id="7410at5206"/>
<dbReference type="GO" id="GO:0005654">
    <property type="term" value="C:nucleoplasm"/>
    <property type="evidence" value="ECO:0007669"/>
    <property type="project" value="UniProtKB-SubCell"/>
</dbReference>
<dbReference type="GO" id="GO:0070545">
    <property type="term" value="C:PeBoW complex"/>
    <property type="evidence" value="ECO:0007669"/>
    <property type="project" value="TreeGrafter"/>
</dbReference>
<dbReference type="GO" id="GO:0030687">
    <property type="term" value="C:preribosome, large subunit precursor"/>
    <property type="evidence" value="ECO:0007669"/>
    <property type="project" value="UniProtKB-UniRule"/>
</dbReference>
<dbReference type="GO" id="GO:0043021">
    <property type="term" value="F:ribonucleoprotein complex binding"/>
    <property type="evidence" value="ECO:0007669"/>
    <property type="project" value="UniProtKB-UniRule"/>
</dbReference>
<dbReference type="GO" id="GO:0003723">
    <property type="term" value="F:RNA binding"/>
    <property type="evidence" value="ECO:0007669"/>
    <property type="project" value="TreeGrafter"/>
</dbReference>
<dbReference type="GO" id="GO:0000466">
    <property type="term" value="P:maturation of 5.8S rRNA from tricistronic rRNA transcript (SSU-rRNA, 5.8S rRNA, LSU-rRNA)"/>
    <property type="evidence" value="ECO:0007669"/>
    <property type="project" value="UniProtKB-UniRule"/>
</dbReference>
<dbReference type="GO" id="GO:0000463">
    <property type="term" value="P:maturation of LSU-rRNA from tricistronic rRNA transcript (SSU-rRNA, 5.8S rRNA, LSU-rRNA)"/>
    <property type="evidence" value="ECO:0007669"/>
    <property type="project" value="UniProtKB-UniRule"/>
</dbReference>
<dbReference type="Gene3D" id="3.40.50.10190">
    <property type="entry name" value="BRCT domain"/>
    <property type="match status" value="1"/>
</dbReference>
<dbReference type="HAMAP" id="MF_03028">
    <property type="entry name" value="Pescadillo"/>
    <property type="match status" value="1"/>
</dbReference>
<dbReference type="InterPro" id="IPR001357">
    <property type="entry name" value="BRCT_dom"/>
</dbReference>
<dbReference type="InterPro" id="IPR036420">
    <property type="entry name" value="BRCT_dom_sf"/>
</dbReference>
<dbReference type="InterPro" id="IPR010613">
    <property type="entry name" value="PES"/>
</dbReference>
<dbReference type="PANTHER" id="PTHR12221">
    <property type="entry name" value="PESCADILLO - RELATED"/>
    <property type="match status" value="1"/>
</dbReference>
<dbReference type="PANTHER" id="PTHR12221:SF6">
    <property type="entry name" value="PESCADILLO HOMOLOG"/>
    <property type="match status" value="1"/>
</dbReference>
<dbReference type="Pfam" id="PF16589">
    <property type="entry name" value="BRCT_2"/>
    <property type="match status" value="1"/>
</dbReference>
<dbReference type="Pfam" id="PF06732">
    <property type="entry name" value="Pescadillo_N"/>
    <property type="match status" value="1"/>
</dbReference>
<dbReference type="SMART" id="SM00292">
    <property type="entry name" value="BRCT"/>
    <property type="match status" value="1"/>
</dbReference>
<dbReference type="SUPFAM" id="SSF52113">
    <property type="entry name" value="BRCT domain"/>
    <property type="match status" value="1"/>
</dbReference>
<dbReference type="PROSITE" id="PS50172">
    <property type="entry name" value="BRCT"/>
    <property type="match status" value="1"/>
</dbReference>
<reference key="1">
    <citation type="journal article" date="2005" name="Science">
        <title>The genome of the basidiomycetous yeast and human pathogen Cryptococcus neoformans.</title>
        <authorList>
            <person name="Loftus B.J."/>
            <person name="Fung E."/>
            <person name="Roncaglia P."/>
            <person name="Rowley D."/>
            <person name="Amedeo P."/>
            <person name="Bruno D."/>
            <person name="Vamathevan J."/>
            <person name="Miranda M."/>
            <person name="Anderson I.J."/>
            <person name="Fraser J.A."/>
            <person name="Allen J.E."/>
            <person name="Bosdet I.E."/>
            <person name="Brent M.R."/>
            <person name="Chiu R."/>
            <person name="Doering T.L."/>
            <person name="Donlin M.J."/>
            <person name="D'Souza C.A."/>
            <person name="Fox D.S."/>
            <person name="Grinberg V."/>
            <person name="Fu J."/>
            <person name="Fukushima M."/>
            <person name="Haas B.J."/>
            <person name="Huang J.C."/>
            <person name="Janbon G."/>
            <person name="Jones S.J.M."/>
            <person name="Koo H.L."/>
            <person name="Krzywinski M.I."/>
            <person name="Kwon-Chung K.J."/>
            <person name="Lengeler K.B."/>
            <person name="Maiti R."/>
            <person name="Marra M.A."/>
            <person name="Marra R.E."/>
            <person name="Mathewson C.A."/>
            <person name="Mitchell T.G."/>
            <person name="Pertea M."/>
            <person name="Riggs F.R."/>
            <person name="Salzberg S.L."/>
            <person name="Schein J.E."/>
            <person name="Shvartsbeyn A."/>
            <person name="Shin H."/>
            <person name="Shumway M."/>
            <person name="Specht C.A."/>
            <person name="Suh B.B."/>
            <person name="Tenney A."/>
            <person name="Utterback T.R."/>
            <person name="Wickes B.L."/>
            <person name="Wortman J.R."/>
            <person name="Wye N.H."/>
            <person name="Kronstad J.W."/>
            <person name="Lodge J.K."/>
            <person name="Heitman J."/>
            <person name="Davis R.W."/>
            <person name="Fraser C.M."/>
            <person name="Hyman R.W."/>
        </authorList>
    </citation>
    <scope>NUCLEOTIDE SEQUENCE [LARGE SCALE GENOMIC DNA]</scope>
    <source>
        <strain>B-3501A</strain>
    </source>
</reference>
<gene>
    <name evidence="1" type="primary">NOP7</name>
    <name type="ordered locus">CNBB4460</name>
</gene>
<organism>
    <name type="scientific">Cryptococcus neoformans var. neoformans serotype D (strain B-3501A)</name>
    <name type="common">Filobasidiella neoformans</name>
    <dbReference type="NCBI Taxonomy" id="283643"/>
    <lineage>
        <taxon>Eukaryota</taxon>
        <taxon>Fungi</taxon>
        <taxon>Dikarya</taxon>
        <taxon>Basidiomycota</taxon>
        <taxon>Agaricomycotina</taxon>
        <taxon>Tremellomycetes</taxon>
        <taxon>Tremellales</taxon>
        <taxon>Cryptococcaceae</taxon>
        <taxon>Cryptococcus</taxon>
        <taxon>Cryptococcus neoformans species complex</taxon>
    </lineage>
</organism>
<keyword id="KW-0175">Coiled coil</keyword>
<keyword id="KW-0539">Nucleus</keyword>
<keyword id="KW-0690">Ribosome biogenesis</keyword>
<keyword id="KW-0698">rRNA processing</keyword>
<sequence length="632" mass="71273">MAKIKKRGESGAAKNYVTRNQALKKLQISLSDFRRLCILKGIYPREPLNKKRANKGSSAPASFYYHKDIQYLLHEPLLVKFREHKAFAKKLARAIGRQEWGLAKNLEDAKPVARLDHLVRERYPTFTLALQDLQDPLNLVHLFSTLPTNPIPGKTLVPSEVIAECSRLISEWKLWAIRTHSLRKMFLGIKGVYYECEVPGQGGEPVRVRWLEGFEFQQHVPHDVDFRILLTFLDLYRTMVGFVLFKLYTDENLVYPPPLDVELDEQGESVGAFKLVERKAAEGADGKTQVSKKAVRKAIKGIKAAGDDADVDMDEGAKETDEEEDEDFVERPSKAQEVDDVASAPLTTYNSLLATSSTPARQNLLFSPYTFYLSRETSSRTWEFVVRAMGGKVITSLTAPTPADAPNADSITHVIIDRPITVERMREMEAGRKWVWIQPQWVADCVNKQKIISSEGYGPGQLLPPHLSPWDGEGELYRPWLEEQGEKAAEGQEGEEEEEAAEQDEGESEDEEEDGKEEVAAEYPPALLAAAQNPSDASLLHAAELEAETNGVSHSAFRAQLKEATKVHAKKVPASQKEKKGEEDLRKIMMSNKKAKLYEKMQYSNREKAAEKEKLEKKRKAIEKRKAKEAKA</sequence>